<dbReference type="EC" id="2.1.3.3" evidence="2"/>
<dbReference type="EMBL" id="CP000812">
    <property type="protein sequence ID" value="ABV34283.1"/>
    <property type="molecule type" value="Genomic_DNA"/>
</dbReference>
<dbReference type="RefSeq" id="WP_012003759.1">
    <property type="nucleotide sequence ID" value="NZ_BSDV01000001.1"/>
</dbReference>
<dbReference type="SMR" id="A8F7Z9"/>
<dbReference type="STRING" id="416591.Tlet_1729"/>
<dbReference type="KEGG" id="tle:Tlet_1729"/>
<dbReference type="eggNOG" id="COG0078">
    <property type="taxonomic scope" value="Bacteria"/>
</dbReference>
<dbReference type="HOGENOM" id="CLU_043846_3_2_0"/>
<dbReference type="OrthoDB" id="9802587at2"/>
<dbReference type="UniPathway" id="UPA00068">
    <property type="reaction ID" value="UER00112"/>
</dbReference>
<dbReference type="Proteomes" id="UP000002016">
    <property type="component" value="Chromosome"/>
</dbReference>
<dbReference type="GO" id="GO:0005737">
    <property type="term" value="C:cytoplasm"/>
    <property type="evidence" value="ECO:0007669"/>
    <property type="project" value="UniProtKB-SubCell"/>
</dbReference>
<dbReference type="GO" id="GO:0016597">
    <property type="term" value="F:amino acid binding"/>
    <property type="evidence" value="ECO:0007669"/>
    <property type="project" value="InterPro"/>
</dbReference>
<dbReference type="GO" id="GO:0004585">
    <property type="term" value="F:ornithine carbamoyltransferase activity"/>
    <property type="evidence" value="ECO:0007669"/>
    <property type="project" value="UniProtKB-UniRule"/>
</dbReference>
<dbReference type="GO" id="GO:0042450">
    <property type="term" value="P:arginine biosynthetic process via ornithine"/>
    <property type="evidence" value="ECO:0007669"/>
    <property type="project" value="TreeGrafter"/>
</dbReference>
<dbReference type="GO" id="GO:0019240">
    <property type="term" value="P:citrulline biosynthetic process"/>
    <property type="evidence" value="ECO:0007669"/>
    <property type="project" value="TreeGrafter"/>
</dbReference>
<dbReference type="GO" id="GO:0006526">
    <property type="term" value="P:L-arginine biosynthetic process"/>
    <property type="evidence" value="ECO:0007669"/>
    <property type="project" value="UniProtKB-UniRule"/>
</dbReference>
<dbReference type="FunFam" id="3.40.50.1370:FF:000008">
    <property type="entry name" value="Ornithine carbamoyltransferase"/>
    <property type="match status" value="1"/>
</dbReference>
<dbReference type="Gene3D" id="3.40.50.1370">
    <property type="entry name" value="Aspartate/ornithine carbamoyltransferase"/>
    <property type="match status" value="2"/>
</dbReference>
<dbReference type="HAMAP" id="MF_01109">
    <property type="entry name" value="OTCase"/>
    <property type="match status" value="1"/>
</dbReference>
<dbReference type="InterPro" id="IPR006132">
    <property type="entry name" value="Asp/Orn_carbamoyltranf_P-bd"/>
</dbReference>
<dbReference type="InterPro" id="IPR006130">
    <property type="entry name" value="Asp/Orn_carbamoylTrfase"/>
</dbReference>
<dbReference type="InterPro" id="IPR036901">
    <property type="entry name" value="Asp/Orn_carbamoylTrfase_sf"/>
</dbReference>
<dbReference type="InterPro" id="IPR006131">
    <property type="entry name" value="Asp_carbamoyltransf_Asp/Orn-bd"/>
</dbReference>
<dbReference type="InterPro" id="IPR002292">
    <property type="entry name" value="Orn/put_carbamltrans"/>
</dbReference>
<dbReference type="InterPro" id="IPR024904">
    <property type="entry name" value="OTCase_ArgI"/>
</dbReference>
<dbReference type="NCBIfam" id="TIGR00658">
    <property type="entry name" value="orni_carb_tr"/>
    <property type="match status" value="1"/>
</dbReference>
<dbReference type="NCBIfam" id="NF001986">
    <property type="entry name" value="PRK00779.1"/>
    <property type="match status" value="1"/>
</dbReference>
<dbReference type="PANTHER" id="PTHR45753:SF2">
    <property type="entry name" value="ORNITHINE CARBAMOYLTRANSFERASE"/>
    <property type="match status" value="1"/>
</dbReference>
<dbReference type="PANTHER" id="PTHR45753">
    <property type="entry name" value="ORNITHINE CARBAMOYLTRANSFERASE, MITOCHONDRIAL"/>
    <property type="match status" value="1"/>
</dbReference>
<dbReference type="Pfam" id="PF00185">
    <property type="entry name" value="OTCace"/>
    <property type="match status" value="1"/>
</dbReference>
<dbReference type="Pfam" id="PF02729">
    <property type="entry name" value="OTCace_N"/>
    <property type="match status" value="1"/>
</dbReference>
<dbReference type="PRINTS" id="PR00100">
    <property type="entry name" value="AOTCASE"/>
</dbReference>
<dbReference type="PRINTS" id="PR00102">
    <property type="entry name" value="OTCASE"/>
</dbReference>
<dbReference type="SUPFAM" id="SSF53671">
    <property type="entry name" value="Aspartate/ornithine carbamoyltransferase"/>
    <property type="match status" value="1"/>
</dbReference>
<dbReference type="PROSITE" id="PS00097">
    <property type="entry name" value="CARBAMOYLTRANSFERASE"/>
    <property type="match status" value="1"/>
</dbReference>
<name>OTC_PSELT</name>
<feature type="chain" id="PRO_1000084865" description="Ornithine carbamoyltransferase">
    <location>
        <begin position="1"/>
        <end position="313"/>
    </location>
</feature>
<feature type="binding site" evidence="2">
    <location>
        <begin position="57"/>
        <end position="60"/>
    </location>
    <ligand>
        <name>carbamoyl phosphate</name>
        <dbReference type="ChEBI" id="CHEBI:58228"/>
    </ligand>
</feature>
<feature type="binding site" evidence="2">
    <location>
        <position position="84"/>
    </location>
    <ligand>
        <name>carbamoyl phosphate</name>
        <dbReference type="ChEBI" id="CHEBI:58228"/>
    </ligand>
</feature>
<feature type="binding site" evidence="2">
    <location>
        <position position="108"/>
    </location>
    <ligand>
        <name>carbamoyl phosphate</name>
        <dbReference type="ChEBI" id="CHEBI:58228"/>
    </ligand>
</feature>
<feature type="binding site" evidence="2">
    <location>
        <begin position="135"/>
        <end position="138"/>
    </location>
    <ligand>
        <name>carbamoyl phosphate</name>
        <dbReference type="ChEBI" id="CHEBI:58228"/>
    </ligand>
</feature>
<feature type="binding site" evidence="2">
    <location>
        <position position="167"/>
    </location>
    <ligand>
        <name>L-ornithine</name>
        <dbReference type="ChEBI" id="CHEBI:46911"/>
    </ligand>
</feature>
<feature type="binding site" evidence="2">
    <location>
        <position position="231"/>
    </location>
    <ligand>
        <name>L-ornithine</name>
        <dbReference type="ChEBI" id="CHEBI:46911"/>
    </ligand>
</feature>
<feature type="binding site" evidence="2">
    <location>
        <begin position="235"/>
        <end position="236"/>
    </location>
    <ligand>
        <name>L-ornithine</name>
        <dbReference type="ChEBI" id="CHEBI:46911"/>
    </ligand>
</feature>
<feature type="binding site" evidence="2">
    <location>
        <begin position="272"/>
        <end position="273"/>
    </location>
    <ligand>
        <name>carbamoyl phosphate</name>
        <dbReference type="ChEBI" id="CHEBI:58228"/>
    </ligand>
</feature>
<feature type="binding site" evidence="2">
    <location>
        <position position="300"/>
    </location>
    <ligand>
        <name>carbamoyl phosphate</name>
        <dbReference type="ChEBI" id="CHEBI:58228"/>
    </ligand>
</feature>
<protein>
    <recommendedName>
        <fullName evidence="2">Ornithine carbamoyltransferase</fullName>
        <shortName evidence="2">OTCase</shortName>
        <ecNumber evidence="2">2.1.3.3</ecNumber>
    </recommendedName>
</protein>
<sequence length="313" mass="35289">MAINLTGRSLLTLLEYTPEEISFLLDLSAQVKRESRARIVHKRFAGKTLAMIFEKRSTRTRMAFETAFAEEGGHPIFLSIQDIQLGAKESIEDTARVLGRMVDAIMFRGYKQETVETLAKYSGVPVYNGLTDVYHPTQVLADLMTTQEVFGKLKGIKLVFMGDGRNNMANSLMIGCAKMGMHYVVCSPAELRPDENLMQTCLTIAKETDSKIEVIDDPEKAVDGADVIYTDVWASMGEESKQQERERLLRPYQVNEVLMRKTGKKDTIFLHCLPAVKGQEVTFDVIEGKQSRVWDEAENRKHTIKALMIATLL</sequence>
<keyword id="KW-0028">Amino-acid biosynthesis</keyword>
<keyword id="KW-0055">Arginine biosynthesis</keyword>
<keyword id="KW-0963">Cytoplasm</keyword>
<keyword id="KW-1185">Reference proteome</keyword>
<keyword id="KW-0808">Transferase</keyword>
<gene>
    <name evidence="2" type="primary">argF</name>
    <name type="ordered locus">Tlet_1729</name>
</gene>
<evidence type="ECO:0000250" key="1"/>
<evidence type="ECO:0000255" key="2">
    <source>
        <dbReference type="HAMAP-Rule" id="MF_01109"/>
    </source>
</evidence>
<proteinExistence type="inferred from homology"/>
<accession>A8F7Z9</accession>
<reference key="1">
    <citation type="submission" date="2007-08" db="EMBL/GenBank/DDBJ databases">
        <title>Complete sequence of Thermotoga lettingae TMO.</title>
        <authorList>
            <consortium name="US DOE Joint Genome Institute"/>
            <person name="Copeland A."/>
            <person name="Lucas S."/>
            <person name="Lapidus A."/>
            <person name="Barry K."/>
            <person name="Glavina del Rio T."/>
            <person name="Dalin E."/>
            <person name="Tice H."/>
            <person name="Pitluck S."/>
            <person name="Foster B."/>
            <person name="Bruce D."/>
            <person name="Schmutz J."/>
            <person name="Larimer F."/>
            <person name="Land M."/>
            <person name="Hauser L."/>
            <person name="Kyrpides N."/>
            <person name="Mikhailova N."/>
            <person name="Nelson K."/>
            <person name="Gogarten J.P."/>
            <person name="Noll K."/>
            <person name="Richardson P."/>
        </authorList>
    </citation>
    <scope>NUCLEOTIDE SEQUENCE [LARGE SCALE GENOMIC DNA]</scope>
    <source>
        <strain>ATCC BAA-301 / DSM 14385 / NBRC 107922 / TMO</strain>
    </source>
</reference>
<organism>
    <name type="scientific">Pseudothermotoga lettingae (strain ATCC BAA-301 / DSM 14385 / NBRC 107922 / TMO)</name>
    <name type="common">Thermotoga lettingae</name>
    <dbReference type="NCBI Taxonomy" id="416591"/>
    <lineage>
        <taxon>Bacteria</taxon>
        <taxon>Thermotogati</taxon>
        <taxon>Thermotogota</taxon>
        <taxon>Thermotogae</taxon>
        <taxon>Thermotogales</taxon>
        <taxon>Thermotogaceae</taxon>
        <taxon>Pseudothermotoga</taxon>
    </lineage>
</organism>
<comment type="function">
    <text evidence="1">Reversibly catalyzes the transfer of the carbamoyl group from carbamoyl phosphate (CP) to the N(epsilon) atom of ornithine (ORN) to produce L-citrulline.</text>
</comment>
<comment type="catalytic activity">
    <reaction evidence="2">
        <text>carbamoyl phosphate + L-ornithine = L-citrulline + phosphate + H(+)</text>
        <dbReference type="Rhea" id="RHEA:19513"/>
        <dbReference type="ChEBI" id="CHEBI:15378"/>
        <dbReference type="ChEBI" id="CHEBI:43474"/>
        <dbReference type="ChEBI" id="CHEBI:46911"/>
        <dbReference type="ChEBI" id="CHEBI:57743"/>
        <dbReference type="ChEBI" id="CHEBI:58228"/>
        <dbReference type="EC" id="2.1.3.3"/>
    </reaction>
</comment>
<comment type="pathway">
    <text evidence="2">Amino-acid biosynthesis; L-arginine biosynthesis; L-arginine from L-ornithine and carbamoyl phosphate: step 1/3.</text>
</comment>
<comment type="subcellular location">
    <subcellularLocation>
        <location evidence="2">Cytoplasm</location>
    </subcellularLocation>
</comment>
<comment type="similarity">
    <text evidence="2">Belongs to the aspartate/ornithine carbamoyltransferase superfamily. OTCase family.</text>
</comment>